<sequence length="113" mass="12918">MAGYRKLGRPTDQRKAMLRNLVTSFLKHGKIETTETRAKETRSIAEKMITLAKRGDLHARRQVLSFVTEETVVQRLFEEIAPKYAERNGGYTRIYKVGPRRGDGAEVVILELV</sequence>
<keyword id="KW-0687">Ribonucleoprotein</keyword>
<keyword id="KW-0689">Ribosomal protein</keyword>
<comment type="subunit">
    <text evidence="1">Part of the 50S ribosomal subunit. Contacts protein L32.</text>
</comment>
<comment type="similarity">
    <text evidence="1">Belongs to the bacterial ribosomal protein bL17 family.</text>
</comment>
<proteinExistence type="inferred from homology"/>
<feature type="chain" id="PRO_1000184011" description="Large ribosomal subunit protein bL17">
    <location>
        <begin position="1"/>
        <end position="113"/>
    </location>
</feature>
<protein>
    <recommendedName>
        <fullName evidence="1">Large ribosomal subunit protein bL17</fullName>
    </recommendedName>
    <alternativeName>
        <fullName evidence="2">50S ribosomal protein L17</fullName>
    </alternativeName>
</protein>
<organism>
    <name type="scientific">Clostridium botulinum (strain Kyoto / Type A2)</name>
    <dbReference type="NCBI Taxonomy" id="536232"/>
    <lineage>
        <taxon>Bacteria</taxon>
        <taxon>Bacillati</taxon>
        <taxon>Bacillota</taxon>
        <taxon>Clostridia</taxon>
        <taxon>Eubacteriales</taxon>
        <taxon>Clostridiaceae</taxon>
        <taxon>Clostridium</taxon>
    </lineage>
</organism>
<evidence type="ECO:0000255" key="1">
    <source>
        <dbReference type="HAMAP-Rule" id="MF_01368"/>
    </source>
</evidence>
<evidence type="ECO:0000305" key="2"/>
<dbReference type="EMBL" id="CP001581">
    <property type="protein sequence ID" value="ACO85817.1"/>
    <property type="molecule type" value="Genomic_DNA"/>
</dbReference>
<dbReference type="RefSeq" id="WP_003357477.1">
    <property type="nucleotide sequence ID" value="NC_012563.1"/>
</dbReference>
<dbReference type="SMR" id="C1FMS1"/>
<dbReference type="GeneID" id="5187110"/>
<dbReference type="KEGG" id="cby:CLM_3918"/>
<dbReference type="eggNOG" id="COG0203">
    <property type="taxonomic scope" value="Bacteria"/>
</dbReference>
<dbReference type="HOGENOM" id="CLU_074407_2_2_9"/>
<dbReference type="Proteomes" id="UP000001374">
    <property type="component" value="Chromosome"/>
</dbReference>
<dbReference type="GO" id="GO:0022625">
    <property type="term" value="C:cytosolic large ribosomal subunit"/>
    <property type="evidence" value="ECO:0007669"/>
    <property type="project" value="TreeGrafter"/>
</dbReference>
<dbReference type="GO" id="GO:0003735">
    <property type="term" value="F:structural constituent of ribosome"/>
    <property type="evidence" value="ECO:0007669"/>
    <property type="project" value="InterPro"/>
</dbReference>
<dbReference type="GO" id="GO:0006412">
    <property type="term" value="P:translation"/>
    <property type="evidence" value="ECO:0007669"/>
    <property type="project" value="UniProtKB-UniRule"/>
</dbReference>
<dbReference type="FunFam" id="3.90.1030.10:FF:000002">
    <property type="entry name" value="50S ribosomal protein L17"/>
    <property type="match status" value="1"/>
</dbReference>
<dbReference type="Gene3D" id="3.90.1030.10">
    <property type="entry name" value="Ribosomal protein L17"/>
    <property type="match status" value="1"/>
</dbReference>
<dbReference type="HAMAP" id="MF_01368">
    <property type="entry name" value="Ribosomal_bL17"/>
    <property type="match status" value="1"/>
</dbReference>
<dbReference type="InterPro" id="IPR000456">
    <property type="entry name" value="Ribosomal_bL17"/>
</dbReference>
<dbReference type="InterPro" id="IPR047859">
    <property type="entry name" value="Ribosomal_bL17_CS"/>
</dbReference>
<dbReference type="InterPro" id="IPR036373">
    <property type="entry name" value="Ribosomal_bL17_sf"/>
</dbReference>
<dbReference type="NCBIfam" id="TIGR00059">
    <property type="entry name" value="L17"/>
    <property type="match status" value="1"/>
</dbReference>
<dbReference type="PANTHER" id="PTHR14413:SF16">
    <property type="entry name" value="LARGE RIBOSOMAL SUBUNIT PROTEIN BL17M"/>
    <property type="match status" value="1"/>
</dbReference>
<dbReference type="PANTHER" id="PTHR14413">
    <property type="entry name" value="RIBOSOMAL PROTEIN L17"/>
    <property type="match status" value="1"/>
</dbReference>
<dbReference type="Pfam" id="PF01196">
    <property type="entry name" value="Ribosomal_L17"/>
    <property type="match status" value="1"/>
</dbReference>
<dbReference type="SUPFAM" id="SSF64263">
    <property type="entry name" value="Prokaryotic ribosomal protein L17"/>
    <property type="match status" value="1"/>
</dbReference>
<dbReference type="PROSITE" id="PS01167">
    <property type="entry name" value="RIBOSOMAL_L17"/>
    <property type="match status" value="1"/>
</dbReference>
<accession>C1FMS1</accession>
<gene>
    <name evidence="1" type="primary">rplQ</name>
    <name type="ordered locus">CLM_3918</name>
</gene>
<reference key="1">
    <citation type="submission" date="2008-10" db="EMBL/GenBank/DDBJ databases">
        <title>Genome sequence of Clostridium botulinum A2 Kyoto.</title>
        <authorList>
            <person name="Shrivastava S."/>
            <person name="Brinkac L.M."/>
            <person name="Brown J.L."/>
            <person name="Bruce D."/>
            <person name="Detter C.C."/>
            <person name="Johnson E.A."/>
            <person name="Munk C.A."/>
            <person name="Smith L.A."/>
            <person name="Smith T.J."/>
            <person name="Sutton G."/>
            <person name="Brettin T.S."/>
        </authorList>
    </citation>
    <scope>NUCLEOTIDE SEQUENCE [LARGE SCALE GENOMIC DNA]</scope>
    <source>
        <strain>Kyoto / Type A2</strain>
    </source>
</reference>
<name>RL17_CLOBJ</name>